<dbReference type="EC" id="2.7.13.3"/>
<dbReference type="EMBL" id="Y14079">
    <property type="protein sequence ID" value="CAA74432.1"/>
    <property type="molecule type" value="Genomic_DNA"/>
</dbReference>
<dbReference type="EMBL" id="AL009126">
    <property type="protein sequence ID" value="CAB12760.1"/>
    <property type="molecule type" value="Genomic_DNA"/>
</dbReference>
<dbReference type="PIR" id="E69824">
    <property type="entry name" value="E69824"/>
</dbReference>
<dbReference type="RefSeq" id="NP_388813.1">
    <property type="nucleotide sequence ID" value="NC_000964.3"/>
</dbReference>
<dbReference type="RefSeq" id="WP_003245750.1">
    <property type="nucleotide sequence ID" value="NZ_OZ025638.1"/>
</dbReference>
<dbReference type="SMR" id="O07527"/>
<dbReference type="FunCoup" id="O07527">
    <property type="interactions" value="1"/>
</dbReference>
<dbReference type="IntAct" id="O07527">
    <property type="interactions" value="1"/>
</dbReference>
<dbReference type="STRING" id="224308.BSU09320"/>
<dbReference type="PaxDb" id="224308-BSU09320"/>
<dbReference type="DNASU" id="939760"/>
<dbReference type="EnsemblBacteria" id="CAB12760">
    <property type="protein sequence ID" value="CAB12760"/>
    <property type="gene ID" value="BSU_09320"/>
</dbReference>
<dbReference type="GeneID" id="939760"/>
<dbReference type="KEGG" id="bsu:BSU09320"/>
<dbReference type="PATRIC" id="fig|224308.179.peg.1005"/>
<dbReference type="eggNOG" id="COG2203">
    <property type="taxonomic scope" value="Bacteria"/>
</dbReference>
<dbReference type="eggNOG" id="COG4585">
    <property type="taxonomic scope" value="Bacteria"/>
</dbReference>
<dbReference type="InParanoid" id="O07527"/>
<dbReference type="OrthoDB" id="9795828at2"/>
<dbReference type="PhylomeDB" id="O07527"/>
<dbReference type="BioCyc" id="BSUB:BSU09320-MONOMER"/>
<dbReference type="Proteomes" id="UP000001570">
    <property type="component" value="Chromosome"/>
</dbReference>
<dbReference type="GO" id="GO:0005886">
    <property type="term" value="C:plasma membrane"/>
    <property type="evidence" value="ECO:0000318"/>
    <property type="project" value="GO_Central"/>
</dbReference>
<dbReference type="GO" id="GO:0005524">
    <property type="term" value="F:ATP binding"/>
    <property type="evidence" value="ECO:0007669"/>
    <property type="project" value="UniProtKB-KW"/>
</dbReference>
<dbReference type="GO" id="GO:0000155">
    <property type="term" value="F:phosphorelay sensor kinase activity"/>
    <property type="evidence" value="ECO:0007669"/>
    <property type="project" value="InterPro"/>
</dbReference>
<dbReference type="GO" id="GO:0046983">
    <property type="term" value="F:protein dimerization activity"/>
    <property type="evidence" value="ECO:0007669"/>
    <property type="project" value="InterPro"/>
</dbReference>
<dbReference type="GO" id="GO:0004672">
    <property type="term" value="F:protein kinase activity"/>
    <property type="evidence" value="ECO:0000318"/>
    <property type="project" value="GO_Central"/>
</dbReference>
<dbReference type="CDD" id="cd16917">
    <property type="entry name" value="HATPase_UhpB-NarQ-NarX-like"/>
    <property type="match status" value="1"/>
</dbReference>
<dbReference type="Gene3D" id="1.20.5.1930">
    <property type="match status" value="1"/>
</dbReference>
<dbReference type="Gene3D" id="3.30.450.40">
    <property type="match status" value="1"/>
</dbReference>
<dbReference type="Gene3D" id="3.30.565.10">
    <property type="entry name" value="Histidine kinase-like ATPase, C-terminal domain"/>
    <property type="match status" value="1"/>
</dbReference>
<dbReference type="InterPro" id="IPR003018">
    <property type="entry name" value="GAF"/>
</dbReference>
<dbReference type="InterPro" id="IPR029016">
    <property type="entry name" value="GAF-like_dom_sf"/>
</dbReference>
<dbReference type="InterPro" id="IPR036890">
    <property type="entry name" value="HATPase_C_sf"/>
</dbReference>
<dbReference type="InterPro" id="IPR050482">
    <property type="entry name" value="Sensor_HK_TwoCompSys"/>
</dbReference>
<dbReference type="InterPro" id="IPR011712">
    <property type="entry name" value="Sig_transdc_His_kin_sub3_dim/P"/>
</dbReference>
<dbReference type="PANTHER" id="PTHR24421">
    <property type="entry name" value="NITRATE/NITRITE SENSOR PROTEIN NARX-RELATED"/>
    <property type="match status" value="1"/>
</dbReference>
<dbReference type="PANTHER" id="PTHR24421:SF40">
    <property type="entry name" value="SENSOR HISTIDINE KINASE YHCY"/>
    <property type="match status" value="1"/>
</dbReference>
<dbReference type="Pfam" id="PF13185">
    <property type="entry name" value="GAF_2"/>
    <property type="match status" value="1"/>
</dbReference>
<dbReference type="Pfam" id="PF02518">
    <property type="entry name" value="HATPase_c"/>
    <property type="match status" value="1"/>
</dbReference>
<dbReference type="Pfam" id="PF07730">
    <property type="entry name" value="HisKA_3"/>
    <property type="match status" value="1"/>
</dbReference>
<dbReference type="SMART" id="SM00065">
    <property type="entry name" value="GAF"/>
    <property type="match status" value="1"/>
</dbReference>
<dbReference type="SMART" id="SM00387">
    <property type="entry name" value="HATPase_c"/>
    <property type="match status" value="1"/>
</dbReference>
<dbReference type="SUPFAM" id="SSF55874">
    <property type="entry name" value="ATPase domain of HSP90 chaperone/DNA topoisomerase II/histidine kinase"/>
    <property type="match status" value="1"/>
</dbReference>
<dbReference type="SUPFAM" id="SSF55781">
    <property type="entry name" value="GAF domain-like"/>
    <property type="match status" value="1"/>
</dbReference>
<comment type="function">
    <text evidence="2">Member of the two-component regulatory system YhcY/YhcZ. Probably activates YhcZ by phosphorylation.</text>
</comment>
<comment type="catalytic activity">
    <reaction>
        <text>ATP + protein L-histidine = ADP + protein N-phospho-L-histidine.</text>
        <dbReference type="EC" id="2.7.13.3"/>
    </reaction>
</comment>
<sequence length="379" mass="41990">MSKTRMEKLKTLKTIAETLNQGHDIKATLDEVLKELLSLTNLQSGWIFLIEEDGSYTLAADAYLPPALSRKEKVLMCEGECYCLTKFNNGGLRKAANIMNCKRIESAENLHCFDTEGITHHATVPLEDGDRRFGLLNVAAAGKTMFDEEELHLLESVAFQIGTAIQRMRLSEYQQKNALLMERNRLAQELHDSVNQMLFSVSLTAKAAKTLTKDENLQQMIDFIQNLSQDALAEMKALIWQLRPGGLEKGLAEAIKSYGALIGLKIIFTQKGCPVLTDEQEHMLWRVVQEALNNCKKHAGTDTAYVSLTASLCHAELDIIDHGAGFRYEAHAGLPSLGIKGMKERAEKAGAKFWIESALGTGTKLSIRLPLKSRKGGAV</sequence>
<feature type="chain" id="PRO_0000360784" description="Sensor histidine kinase YhcY">
    <location>
        <begin position="1"/>
        <end position="379"/>
    </location>
</feature>
<feature type="domain" description="Histidine kinase">
    <location>
        <begin position="185"/>
        <end position="373"/>
    </location>
</feature>
<feature type="modified residue" description="Phosphohistidine; by autocatalysis" evidence="1">
    <location>
        <position position="191"/>
    </location>
</feature>
<protein>
    <recommendedName>
        <fullName>Sensor histidine kinase YhcY</fullName>
        <ecNumber>2.7.13.3</ecNumber>
    </recommendedName>
</protein>
<reference key="1">
    <citation type="journal article" date="1998" name="Microbiology">
        <title>The 172 kb prkA-addAB region from 83 degrees to 97 degrees of the Bacillus subtilis chromosome contains several dysfunctional genes, the glyB marker, many genes encoding transporter proteins, and the ubiquitous hit gene.</title>
        <authorList>
            <person name="Noback M.A."/>
            <person name="Holsappel S."/>
            <person name="Kiewiet R."/>
            <person name="Terpstra P."/>
            <person name="Wambutt R."/>
            <person name="Wedler H."/>
            <person name="Venema G."/>
            <person name="Bron S."/>
        </authorList>
    </citation>
    <scope>NUCLEOTIDE SEQUENCE [GENOMIC DNA]</scope>
    <source>
        <strain>168</strain>
    </source>
</reference>
<reference key="2">
    <citation type="journal article" date="1997" name="Nature">
        <title>The complete genome sequence of the Gram-positive bacterium Bacillus subtilis.</title>
        <authorList>
            <person name="Kunst F."/>
            <person name="Ogasawara N."/>
            <person name="Moszer I."/>
            <person name="Albertini A.M."/>
            <person name="Alloni G."/>
            <person name="Azevedo V."/>
            <person name="Bertero M.G."/>
            <person name="Bessieres P."/>
            <person name="Bolotin A."/>
            <person name="Borchert S."/>
            <person name="Borriss R."/>
            <person name="Boursier L."/>
            <person name="Brans A."/>
            <person name="Braun M."/>
            <person name="Brignell S.C."/>
            <person name="Bron S."/>
            <person name="Brouillet S."/>
            <person name="Bruschi C.V."/>
            <person name="Caldwell B."/>
            <person name="Capuano V."/>
            <person name="Carter N.M."/>
            <person name="Choi S.-K."/>
            <person name="Codani J.-J."/>
            <person name="Connerton I.F."/>
            <person name="Cummings N.J."/>
            <person name="Daniel R.A."/>
            <person name="Denizot F."/>
            <person name="Devine K.M."/>
            <person name="Duesterhoeft A."/>
            <person name="Ehrlich S.D."/>
            <person name="Emmerson P.T."/>
            <person name="Entian K.-D."/>
            <person name="Errington J."/>
            <person name="Fabret C."/>
            <person name="Ferrari E."/>
            <person name="Foulger D."/>
            <person name="Fritz C."/>
            <person name="Fujita M."/>
            <person name="Fujita Y."/>
            <person name="Fuma S."/>
            <person name="Galizzi A."/>
            <person name="Galleron N."/>
            <person name="Ghim S.-Y."/>
            <person name="Glaser P."/>
            <person name="Goffeau A."/>
            <person name="Golightly E.J."/>
            <person name="Grandi G."/>
            <person name="Guiseppi G."/>
            <person name="Guy B.J."/>
            <person name="Haga K."/>
            <person name="Haiech J."/>
            <person name="Harwood C.R."/>
            <person name="Henaut A."/>
            <person name="Hilbert H."/>
            <person name="Holsappel S."/>
            <person name="Hosono S."/>
            <person name="Hullo M.-F."/>
            <person name="Itaya M."/>
            <person name="Jones L.-M."/>
            <person name="Joris B."/>
            <person name="Karamata D."/>
            <person name="Kasahara Y."/>
            <person name="Klaerr-Blanchard M."/>
            <person name="Klein C."/>
            <person name="Kobayashi Y."/>
            <person name="Koetter P."/>
            <person name="Koningstein G."/>
            <person name="Krogh S."/>
            <person name="Kumano M."/>
            <person name="Kurita K."/>
            <person name="Lapidus A."/>
            <person name="Lardinois S."/>
            <person name="Lauber J."/>
            <person name="Lazarevic V."/>
            <person name="Lee S.-M."/>
            <person name="Levine A."/>
            <person name="Liu H."/>
            <person name="Masuda S."/>
            <person name="Mauel C."/>
            <person name="Medigue C."/>
            <person name="Medina N."/>
            <person name="Mellado R.P."/>
            <person name="Mizuno M."/>
            <person name="Moestl D."/>
            <person name="Nakai S."/>
            <person name="Noback M."/>
            <person name="Noone D."/>
            <person name="O'Reilly M."/>
            <person name="Ogawa K."/>
            <person name="Ogiwara A."/>
            <person name="Oudega B."/>
            <person name="Park S.-H."/>
            <person name="Parro V."/>
            <person name="Pohl T.M."/>
            <person name="Portetelle D."/>
            <person name="Porwollik S."/>
            <person name="Prescott A.M."/>
            <person name="Presecan E."/>
            <person name="Pujic P."/>
            <person name="Purnelle B."/>
            <person name="Rapoport G."/>
            <person name="Rey M."/>
            <person name="Reynolds S."/>
            <person name="Rieger M."/>
            <person name="Rivolta C."/>
            <person name="Rocha E."/>
            <person name="Roche B."/>
            <person name="Rose M."/>
            <person name="Sadaie Y."/>
            <person name="Sato T."/>
            <person name="Scanlan E."/>
            <person name="Schleich S."/>
            <person name="Schroeter R."/>
            <person name="Scoffone F."/>
            <person name="Sekiguchi J."/>
            <person name="Sekowska A."/>
            <person name="Seror S.J."/>
            <person name="Serror P."/>
            <person name="Shin B.-S."/>
            <person name="Soldo B."/>
            <person name="Sorokin A."/>
            <person name="Tacconi E."/>
            <person name="Takagi T."/>
            <person name="Takahashi H."/>
            <person name="Takemaru K."/>
            <person name="Takeuchi M."/>
            <person name="Tamakoshi A."/>
            <person name="Tanaka T."/>
            <person name="Terpstra P."/>
            <person name="Tognoni A."/>
            <person name="Tosato V."/>
            <person name="Uchiyama S."/>
            <person name="Vandenbol M."/>
            <person name="Vannier F."/>
            <person name="Vassarotti A."/>
            <person name="Viari A."/>
            <person name="Wambutt R."/>
            <person name="Wedler E."/>
            <person name="Wedler H."/>
            <person name="Weitzenegger T."/>
            <person name="Winters P."/>
            <person name="Wipat A."/>
            <person name="Yamamoto H."/>
            <person name="Yamane K."/>
            <person name="Yasumoto K."/>
            <person name="Yata K."/>
            <person name="Yoshida K."/>
            <person name="Yoshikawa H.-F."/>
            <person name="Zumstein E."/>
            <person name="Yoshikawa H."/>
            <person name="Danchin A."/>
        </authorList>
    </citation>
    <scope>NUCLEOTIDE SEQUENCE [LARGE SCALE GENOMIC DNA]</scope>
    <source>
        <strain>168</strain>
    </source>
</reference>
<reference key="3">
    <citation type="journal article" date="2001" name="J. Bacteriol.">
        <title>Comprehensive DNA microarray analysis of Bacillus subtilis two-component regulatory systems.</title>
        <authorList>
            <person name="Kobayashi K."/>
            <person name="Ogura M."/>
            <person name="Yamaguchi H."/>
            <person name="Yoshida K."/>
            <person name="Ogasawara N."/>
            <person name="Tanaka T."/>
            <person name="Fujita Y."/>
        </authorList>
    </citation>
    <scope>FUNCTION</scope>
</reference>
<evidence type="ECO:0000250" key="1"/>
<evidence type="ECO:0000269" key="2">
    <source>
    </source>
</evidence>
<gene>
    <name type="primary">yhcY</name>
    <name type="ordered locus">BSU09320</name>
</gene>
<organism>
    <name type="scientific">Bacillus subtilis (strain 168)</name>
    <dbReference type="NCBI Taxonomy" id="224308"/>
    <lineage>
        <taxon>Bacteria</taxon>
        <taxon>Bacillati</taxon>
        <taxon>Bacillota</taxon>
        <taxon>Bacilli</taxon>
        <taxon>Bacillales</taxon>
        <taxon>Bacillaceae</taxon>
        <taxon>Bacillus</taxon>
    </lineage>
</organism>
<keyword id="KW-0067">ATP-binding</keyword>
<keyword id="KW-0418">Kinase</keyword>
<keyword id="KW-0547">Nucleotide-binding</keyword>
<keyword id="KW-0597">Phosphoprotein</keyword>
<keyword id="KW-1185">Reference proteome</keyword>
<keyword id="KW-0808">Transferase</keyword>
<keyword id="KW-0902">Two-component regulatory system</keyword>
<name>YHCY_BACSU</name>
<accession>O07527</accession>
<accession>Q796Y2</accession>
<proteinExistence type="inferred from homology"/>